<proteinExistence type="evidence at transcript level"/>
<reference key="1">
    <citation type="journal article" date="1988" name="Eur. J. Biochem.">
        <title>Molecular analysis of resveratrol synthase. cDNA, genomic clones and relationship with chalcone synthase.</title>
        <authorList>
            <person name="Schroeder G."/>
            <person name="Brown J.W.S."/>
            <person name="Schroeder J."/>
        </authorList>
    </citation>
    <scope>NUCLEOTIDE SEQUENCE</scope>
</reference>
<reference key="2">
    <citation type="patent" date="1989-04-05" number="EP0309862">
        <title>Stilbene synthase gene.</title>
        <authorList>
            <person name="Hain R."/>
            <person name="Schreier P.H."/>
            <person name="Schroeder G."/>
            <person name="Schroeder J."/>
        </authorList>
    </citation>
    <scope>NUCLEOTIDE SEQUENCE</scope>
</reference>
<organism>
    <name type="scientific">Arachis hypogaea</name>
    <name type="common">Peanut</name>
    <dbReference type="NCBI Taxonomy" id="3818"/>
    <lineage>
        <taxon>Eukaryota</taxon>
        <taxon>Viridiplantae</taxon>
        <taxon>Streptophyta</taxon>
        <taxon>Embryophyta</taxon>
        <taxon>Tracheophyta</taxon>
        <taxon>Spermatophyta</taxon>
        <taxon>Magnoliopsida</taxon>
        <taxon>eudicotyledons</taxon>
        <taxon>Gunneridae</taxon>
        <taxon>Pentapetalae</taxon>
        <taxon>rosids</taxon>
        <taxon>fabids</taxon>
        <taxon>Fabales</taxon>
        <taxon>Fabaceae</taxon>
        <taxon>Papilionoideae</taxon>
        <taxon>50 kb inversion clade</taxon>
        <taxon>dalbergioids sensu lato</taxon>
        <taxon>Dalbergieae</taxon>
        <taxon>Pterocarpus clade</taxon>
        <taxon>Arachis</taxon>
    </lineage>
</organism>
<accession>P20178</accession>
<name>THS1_ARAHY</name>
<comment type="catalytic activity">
    <reaction>
        <text>4-coumaroyl-CoA + 3 malonyl-CoA + 3 H(+) = trans-resveratrol + 4 CO2 + 4 CoA</text>
        <dbReference type="Rhea" id="RHEA:11936"/>
        <dbReference type="ChEBI" id="CHEBI:15378"/>
        <dbReference type="ChEBI" id="CHEBI:16526"/>
        <dbReference type="ChEBI" id="CHEBI:45713"/>
        <dbReference type="ChEBI" id="CHEBI:57287"/>
        <dbReference type="ChEBI" id="CHEBI:57355"/>
        <dbReference type="ChEBI" id="CHEBI:57384"/>
        <dbReference type="EC" id="2.3.1.95"/>
    </reaction>
</comment>
<comment type="pathway">
    <text>Phytoalexin biosynthesis; 3,4',5-trihydroxystilbene biosynthesis; 3,4',5-trihydroxystilbene from trans-4-coumarate: step 2/2.</text>
</comment>
<comment type="subunit">
    <text>Homodimer.</text>
</comment>
<comment type="subcellular location">
    <subcellularLocation>
        <location>Cytoplasm</location>
    </subcellularLocation>
</comment>
<comment type="induction">
    <text>By stress. Experimentally, by yeast extract and elicitor from P.megasperma.</text>
</comment>
<comment type="similarity">
    <text evidence="3">Belongs to the thiolase-like superfamily. Chalcone/stilbene synthases family.</text>
</comment>
<dbReference type="EC" id="2.3.1.95"/>
<dbReference type="EMBL" id="X62299">
    <property type="protein sequence ID" value="CAA44185.1"/>
    <property type="molecule type" value="Genomic_DNA"/>
</dbReference>
<dbReference type="EMBL" id="X62298">
    <property type="protein sequence ID" value="CAA44184.1"/>
    <property type="molecule type" value="Genomic_DNA"/>
</dbReference>
<dbReference type="EMBL" id="A00769">
    <property type="protein sequence ID" value="CAA00091.1"/>
    <property type="molecule type" value="Unassigned_DNA"/>
</dbReference>
<dbReference type="PIR" id="S00334">
    <property type="entry name" value="S00334"/>
</dbReference>
<dbReference type="SMR" id="P20178"/>
<dbReference type="BRENDA" id="2.3.1.95">
    <property type="organism ID" value="404"/>
</dbReference>
<dbReference type="UniPathway" id="UPA00372">
    <property type="reaction ID" value="UER00548"/>
</dbReference>
<dbReference type="GO" id="GO:0005737">
    <property type="term" value="C:cytoplasm"/>
    <property type="evidence" value="ECO:0007669"/>
    <property type="project" value="UniProtKB-SubCell"/>
</dbReference>
<dbReference type="GO" id="GO:0050350">
    <property type="term" value="F:trihydroxystilbene synthase activity"/>
    <property type="evidence" value="ECO:0007669"/>
    <property type="project" value="UniProtKB-EC"/>
</dbReference>
<dbReference type="GO" id="GO:0030639">
    <property type="term" value="P:polyketide biosynthetic process"/>
    <property type="evidence" value="ECO:0007669"/>
    <property type="project" value="TreeGrafter"/>
</dbReference>
<dbReference type="CDD" id="cd00831">
    <property type="entry name" value="CHS_like"/>
    <property type="match status" value="1"/>
</dbReference>
<dbReference type="FunFam" id="3.40.47.10:FF:000014">
    <property type="entry name" value="Chalcone synthase 1"/>
    <property type="match status" value="1"/>
</dbReference>
<dbReference type="FunFam" id="3.40.47.10:FF:000025">
    <property type="entry name" value="Chalcone synthase 2"/>
    <property type="match status" value="1"/>
</dbReference>
<dbReference type="Gene3D" id="3.40.47.10">
    <property type="match status" value="2"/>
</dbReference>
<dbReference type="InterPro" id="IPR012328">
    <property type="entry name" value="Chalcone/stilbene_synt_C"/>
</dbReference>
<dbReference type="InterPro" id="IPR001099">
    <property type="entry name" value="Chalcone/stilbene_synt_N"/>
</dbReference>
<dbReference type="InterPro" id="IPR018088">
    <property type="entry name" value="Chalcone/stilbene_synthase_AS"/>
</dbReference>
<dbReference type="InterPro" id="IPR011141">
    <property type="entry name" value="Polyketide_synthase_type-III"/>
</dbReference>
<dbReference type="InterPro" id="IPR016039">
    <property type="entry name" value="Thiolase-like"/>
</dbReference>
<dbReference type="PANTHER" id="PTHR11877:SF62">
    <property type="entry name" value="CHALCONE SYNTHASE 7"/>
    <property type="match status" value="1"/>
</dbReference>
<dbReference type="PANTHER" id="PTHR11877">
    <property type="entry name" value="HYDROXYMETHYLGLUTARYL-COA SYNTHASE"/>
    <property type="match status" value="1"/>
</dbReference>
<dbReference type="Pfam" id="PF02797">
    <property type="entry name" value="Chal_sti_synt_C"/>
    <property type="match status" value="1"/>
</dbReference>
<dbReference type="Pfam" id="PF00195">
    <property type="entry name" value="Chal_sti_synt_N"/>
    <property type="match status" value="1"/>
</dbReference>
<dbReference type="PIRSF" id="PIRSF000451">
    <property type="entry name" value="PKS_III"/>
    <property type="match status" value="1"/>
</dbReference>
<dbReference type="SUPFAM" id="SSF53901">
    <property type="entry name" value="Thiolase-like"/>
    <property type="match status" value="2"/>
</dbReference>
<dbReference type="PROSITE" id="PS00441">
    <property type="entry name" value="CHALCONE_SYNTH"/>
    <property type="match status" value="1"/>
</dbReference>
<protein>
    <recommendedName>
        <fullName>Stilbene synthase 1</fullName>
        <ecNumber>2.3.1.95</ecNumber>
    </recommendedName>
    <alternativeName>
        <fullName>Resveratrol synthase 1</fullName>
        <shortName>RS1</shortName>
    </alternativeName>
    <alternativeName>
        <fullName>Trihydroxystilbene synthase 1</fullName>
    </alternativeName>
</protein>
<keyword id="KW-0012">Acyltransferase</keyword>
<keyword id="KW-0963">Cytoplasm</keyword>
<keyword id="KW-0346">Stress response</keyword>
<keyword id="KW-0808">Transferase</keyword>
<feature type="chain" id="PRO_0000216079" description="Stilbene synthase 1">
    <location>
        <begin position="1"/>
        <end position="389"/>
    </location>
</feature>
<feature type="active site" evidence="2">
    <location>
        <position position="164"/>
    </location>
</feature>
<feature type="binding site" evidence="1">
    <location>
        <begin position="55"/>
        <end position="58"/>
    </location>
    <ligand>
        <name>substrate</name>
    </ligand>
</feature>
<feature type="binding site" evidence="1">
    <location>
        <position position="267"/>
    </location>
    <ligand>
        <name>substrate</name>
    </ligand>
</feature>
<feature type="binding site" evidence="1">
    <location>
        <begin position="305"/>
        <end position="307"/>
    </location>
    <ligand>
        <name>substrate</name>
    </ligand>
</feature>
<feature type="sequence variant">
    <original>I</original>
    <variation>L</variation>
    <location>
        <position position="236"/>
    </location>
</feature>
<evidence type="ECO:0000250" key="1"/>
<evidence type="ECO:0000255" key="2">
    <source>
        <dbReference type="PROSITE-ProRule" id="PRU10023"/>
    </source>
</evidence>
<evidence type="ECO:0000305" key="3"/>
<sequence length="389" mass="42733">MVSVSGIRKVQRAEGPATVLAIGTANPPNCVDQSTYADYYFRVTNGEHMTDLKKKFQRICERTQIKNRHMYLTEEILKENPNMCAYKAPSLDAREDMMIREVPRVGKEAATKAIKEWGQPMSKITHLIFCTTSGVALPGVDYELIVLLGLDPSVKRYMMYHQGCFAGGTVLRLAKDLAENNKDARVLIVCSENTAVTFRGPNETDMDSLVGQALFADGAAAIIIGSDPVPEVENPIFEIVSTDQQLVPNSHGAIGGLLREVGLTFYLNKSVPDIISQNINGALSKAFDPLGISDYNSIFWIAHLGGRAILDQVEQKVNLKPEKMKATRDVLSNYGNMSSACVFFIMDLMRKKSLETGLKTTGEGLDWGVLFGFGPGLTIETVVLRSMAI</sequence>